<proteinExistence type="inferred from homology"/>
<reference key="1">
    <citation type="journal article" date="1996" name="Infect. Immun.">
        <title>Cloning and characterization of Pseudomonas aeruginosa fliF, necessary for flagellar assembly and bacterial adherence to mucin.</title>
        <authorList>
            <person name="Arora S.K."/>
            <person name="Ritchings B.W."/>
            <person name="Almira E.C."/>
            <person name="Lory S."/>
            <person name="Ramphal R."/>
        </authorList>
    </citation>
    <scope>NUCLEOTIDE SEQUENCE [GENOMIC DNA]</scope>
    <source>
        <strain>PAK</strain>
    </source>
</reference>
<reference key="2">
    <citation type="journal article" date="2000" name="Nature">
        <title>Complete genome sequence of Pseudomonas aeruginosa PAO1, an opportunistic pathogen.</title>
        <authorList>
            <person name="Stover C.K."/>
            <person name="Pham X.-Q.T."/>
            <person name="Erwin A.L."/>
            <person name="Mizoguchi S.D."/>
            <person name="Warrener P."/>
            <person name="Hickey M.J."/>
            <person name="Brinkman F.S.L."/>
            <person name="Hufnagle W.O."/>
            <person name="Kowalik D.J."/>
            <person name="Lagrou M."/>
            <person name="Garber R.L."/>
            <person name="Goltry L."/>
            <person name="Tolentino E."/>
            <person name="Westbrock-Wadman S."/>
            <person name="Yuan Y."/>
            <person name="Brody L.L."/>
            <person name="Coulter S.N."/>
            <person name="Folger K.R."/>
            <person name="Kas A."/>
            <person name="Larbig K."/>
            <person name="Lim R.M."/>
            <person name="Smith K.A."/>
            <person name="Spencer D.H."/>
            <person name="Wong G.K.-S."/>
            <person name="Wu Z."/>
            <person name="Paulsen I.T."/>
            <person name="Reizer J."/>
            <person name="Saier M.H. Jr."/>
            <person name="Hancock R.E.W."/>
            <person name="Lory S."/>
            <person name="Olson M.V."/>
        </authorList>
    </citation>
    <scope>NUCLEOTIDE SEQUENCE [LARGE SCALE GENOMIC DNA]</scope>
    <source>
        <strain>ATCC 15692 / DSM 22644 / CIP 104116 / JCM 14847 / LMG 12228 / 1C / PRS 101 / PAO1</strain>
    </source>
</reference>
<accession>Q51463</accession>
<organism>
    <name type="scientific">Pseudomonas aeruginosa (strain ATCC 15692 / DSM 22644 / CIP 104116 / JCM 14847 / LMG 12228 / 1C / PRS 101 / PAO1)</name>
    <dbReference type="NCBI Taxonomy" id="208964"/>
    <lineage>
        <taxon>Bacteria</taxon>
        <taxon>Pseudomonadati</taxon>
        <taxon>Pseudomonadota</taxon>
        <taxon>Gammaproteobacteria</taxon>
        <taxon>Pseudomonadales</taxon>
        <taxon>Pseudomonadaceae</taxon>
        <taxon>Pseudomonas</taxon>
    </lineage>
</organism>
<dbReference type="EMBL" id="L43507">
    <property type="protein sequence ID" value="AAB06801.1"/>
    <property type="molecule type" value="Genomic_DNA"/>
</dbReference>
<dbReference type="EMBL" id="AE004091">
    <property type="protein sequence ID" value="AAG04490.1"/>
    <property type="molecule type" value="Genomic_DNA"/>
</dbReference>
<dbReference type="PIR" id="F83508">
    <property type="entry name" value="F83508"/>
</dbReference>
<dbReference type="RefSeq" id="NP_249792.1">
    <property type="nucleotide sequence ID" value="NC_002516.2"/>
</dbReference>
<dbReference type="RefSeq" id="WP_003109118.1">
    <property type="nucleotide sequence ID" value="NZ_QZGE01000006.1"/>
</dbReference>
<dbReference type="SMR" id="Q51463"/>
<dbReference type="FunCoup" id="Q51463">
    <property type="interactions" value="150"/>
</dbReference>
<dbReference type="STRING" id="208964.PA1101"/>
<dbReference type="PaxDb" id="208964-PA1101"/>
<dbReference type="GeneID" id="881927"/>
<dbReference type="KEGG" id="pae:PA1101"/>
<dbReference type="PATRIC" id="fig|208964.12.peg.1140"/>
<dbReference type="PseudoCAP" id="PA1101"/>
<dbReference type="HOGENOM" id="CLU_028108_1_1_6"/>
<dbReference type="InParanoid" id="Q51463"/>
<dbReference type="OrthoDB" id="8554211at2"/>
<dbReference type="PhylomeDB" id="Q51463"/>
<dbReference type="BioCyc" id="PAER208964:G1FZ6-1124-MONOMER"/>
<dbReference type="Proteomes" id="UP000002438">
    <property type="component" value="Chromosome"/>
</dbReference>
<dbReference type="GO" id="GO:0009431">
    <property type="term" value="C:bacterial-type flagellum basal body, MS ring"/>
    <property type="evidence" value="ECO:0007669"/>
    <property type="project" value="InterPro"/>
</dbReference>
<dbReference type="GO" id="GO:0005886">
    <property type="term" value="C:plasma membrane"/>
    <property type="evidence" value="ECO:0007669"/>
    <property type="project" value="UniProtKB-SubCell"/>
</dbReference>
<dbReference type="GO" id="GO:0003774">
    <property type="term" value="F:cytoskeletal motor activity"/>
    <property type="evidence" value="ECO:0007669"/>
    <property type="project" value="InterPro"/>
</dbReference>
<dbReference type="GO" id="GO:0071973">
    <property type="term" value="P:bacterial-type flagellum-dependent cell motility"/>
    <property type="evidence" value="ECO:0007669"/>
    <property type="project" value="InterPro"/>
</dbReference>
<dbReference type="Gene3D" id="3.30.300.30">
    <property type="match status" value="1"/>
</dbReference>
<dbReference type="InterPro" id="IPR045851">
    <property type="entry name" value="AMP-bd_C_sf"/>
</dbReference>
<dbReference type="InterPro" id="IPR013556">
    <property type="entry name" value="Flag_M-ring_C"/>
</dbReference>
<dbReference type="InterPro" id="IPR000067">
    <property type="entry name" value="FlgMring_FliF"/>
</dbReference>
<dbReference type="InterPro" id="IPR006182">
    <property type="entry name" value="FliF_N_dom"/>
</dbReference>
<dbReference type="InterPro" id="IPR043427">
    <property type="entry name" value="YscJ/FliF"/>
</dbReference>
<dbReference type="NCBIfam" id="TIGR00206">
    <property type="entry name" value="fliF"/>
    <property type="match status" value="1"/>
</dbReference>
<dbReference type="PANTHER" id="PTHR30046">
    <property type="entry name" value="FLAGELLAR M-RING PROTEIN"/>
    <property type="match status" value="1"/>
</dbReference>
<dbReference type="PANTHER" id="PTHR30046:SF0">
    <property type="entry name" value="FLAGELLAR M-RING PROTEIN"/>
    <property type="match status" value="1"/>
</dbReference>
<dbReference type="Pfam" id="PF01514">
    <property type="entry name" value="YscJ_FliF"/>
    <property type="match status" value="1"/>
</dbReference>
<dbReference type="Pfam" id="PF08345">
    <property type="entry name" value="YscJ_FliF_C"/>
    <property type="match status" value="1"/>
</dbReference>
<dbReference type="PIRSF" id="PIRSF004862">
    <property type="entry name" value="FliF"/>
    <property type="match status" value="1"/>
</dbReference>
<dbReference type="PRINTS" id="PR01009">
    <property type="entry name" value="FLGMRINGFLIF"/>
</dbReference>
<feature type="chain" id="PRO_0000180884" description="Flagellar M-ring protein">
    <location>
        <begin position="1"/>
        <end position="598"/>
    </location>
</feature>
<feature type="transmembrane region" description="Helical" evidence="2">
    <location>
        <begin position="42"/>
        <end position="62"/>
    </location>
</feature>
<feature type="transmembrane region" description="Helical" evidence="2">
    <location>
        <begin position="488"/>
        <end position="508"/>
    </location>
</feature>
<feature type="region of interest" description="Disordered" evidence="3">
    <location>
        <begin position="296"/>
        <end position="392"/>
    </location>
</feature>
<feature type="compositionally biased region" description="Basic and acidic residues" evidence="3">
    <location>
        <begin position="310"/>
        <end position="319"/>
    </location>
</feature>
<feature type="compositionally biased region" description="Low complexity" evidence="3">
    <location>
        <begin position="340"/>
        <end position="351"/>
    </location>
</feature>
<feature type="compositionally biased region" description="Basic and acidic residues" evidence="3">
    <location>
        <begin position="383"/>
        <end position="392"/>
    </location>
</feature>
<feature type="sequence conflict" description="In Ref. 1; AAB06801." evidence="4" ref="1">
    <original>G</original>
    <variation>D</variation>
    <location>
        <position position="251"/>
    </location>
</feature>
<feature type="sequence conflict" description="In Ref. 1; AAB06801." evidence="4" ref="1">
    <original>G</original>
    <variation>D</variation>
    <location>
        <position position="277"/>
    </location>
</feature>
<feature type="sequence conflict" description="In Ref. 1; AAB06801." evidence="4" ref="1">
    <original>YKA</original>
    <variation>NKT</variation>
    <location>
        <begin position="281"/>
        <end position="283"/>
    </location>
</feature>
<feature type="sequence conflict" description="In Ref. 1; AAB06801." evidence="4" ref="1">
    <original>R</original>
    <variation>H</variation>
    <location>
        <position position="313"/>
    </location>
</feature>
<feature type="sequence conflict" description="In Ref. 1; AAB06801." evidence="4" ref="1">
    <original>V</original>
    <variation>M</variation>
    <location>
        <position position="505"/>
    </location>
</feature>
<feature type="sequence conflict" description="In Ref. 1; AAB06801." evidence="4" ref="1">
    <original>G</original>
    <variation>GG</variation>
    <location>
        <position position="530"/>
    </location>
</feature>
<comment type="function">
    <text evidence="1">The M ring may be actively involved in energy transduction.</text>
</comment>
<comment type="subunit">
    <text evidence="1">The basal body constitutes a major portion of the flagellar organelle and consists of four rings (L,P,S, and M) mounted on a central rod. The M ring is integral to the inner membrane of the cell and may be connected to the flagellar rod via the S ring. The S (supramembrane ring) lies just distal to the M ring. The L and P rings lie in the outer membrane and the periplasmic space, respectively (By similarity).</text>
</comment>
<comment type="subcellular location">
    <subcellularLocation>
        <location evidence="1">Cell inner membrane</location>
        <topology evidence="1">Multi-pass membrane protein</topology>
    </subcellularLocation>
    <subcellularLocation>
        <location evidence="1">Bacterial flagellum basal body</location>
    </subcellularLocation>
</comment>
<comment type="similarity">
    <text evidence="4">Belongs to the FliF family.</text>
</comment>
<sequence length="598" mass="64050">MADALIDSQVPAKSGGAGMLKKSFPGLSFLDNLSEMTMLRQIGLLVGLAASVAIGFAVVLWSQQPDYKPLYGSLNGVDANRVVEALTAADIPYKVEPNSGALLVKADDLGRARMKVASAGVAPTDNNVGFEILDKEQALGTSQFMEATNYRRGLEGELARTVSSLNNVKAARVHLAIPKSSVFVRDDRKPSASVLVELYPGRSLEPSQVMAIVNLVATSVPELDKSQVTVVDQKGNLLSDQQELSELTMAGKQFDFTRRMEGLLTQRVHNILQPVLGNGRYKAEVSADVDFSAVESTSEMYNPDQPALRSEQRNNEERQNSSGPQGVPGALSNQPPGPASAPQQATASAPADYVAPGQPLKDANGQTIIDPKTGKPELAPYPTDKRDQTTRNYELDRSISYTKQQQGRLRRLSVAVVLDDQMKVDAKTGEVSHQPWSADELARFTRLVQDSVGYDASRGDSVSVINAPFAPAQAEEIDSIPFYSQPWFWDIVKQVLGVLFILVLVFGVLRPVLSNITGGGKGKSLAGGGGRDGDLALGESGLEGSLADDRVSIGGPSSILLPSPTEGYDAQLNAIKNLVAQDPGRVAQVVKEWINADE</sequence>
<name>FLIF_PSEAE</name>
<gene>
    <name type="primary">fliF</name>
    <name type="ordered locus">PA1101</name>
</gene>
<keyword id="KW-0975">Bacterial flagellum</keyword>
<keyword id="KW-0997">Cell inner membrane</keyword>
<keyword id="KW-1003">Cell membrane</keyword>
<keyword id="KW-0472">Membrane</keyword>
<keyword id="KW-1185">Reference proteome</keyword>
<keyword id="KW-0812">Transmembrane</keyword>
<keyword id="KW-1133">Transmembrane helix</keyword>
<protein>
    <recommendedName>
        <fullName>Flagellar M-ring protein</fullName>
    </recommendedName>
</protein>
<evidence type="ECO:0000250" key="1"/>
<evidence type="ECO:0000255" key="2"/>
<evidence type="ECO:0000256" key="3">
    <source>
        <dbReference type="SAM" id="MobiDB-lite"/>
    </source>
</evidence>
<evidence type="ECO:0000305" key="4"/>